<organism>
    <name type="scientific">Shigella flexneri</name>
    <dbReference type="NCBI Taxonomy" id="623"/>
    <lineage>
        <taxon>Bacteria</taxon>
        <taxon>Pseudomonadati</taxon>
        <taxon>Pseudomonadota</taxon>
        <taxon>Gammaproteobacteria</taxon>
        <taxon>Enterobacterales</taxon>
        <taxon>Enterobacteriaceae</taxon>
        <taxon>Shigella</taxon>
    </lineage>
</organism>
<protein>
    <recommendedName>
        <fullName evidence="1">7-carboxy-7-deazaguanine synthase</fullName>
        <shortName evidence="1">CDG synthase</shortName>
        <ecNumber evidence="1">4.3.99.3</ecNumber>
    </recommendedName>
    <alternativeName>
        <fullName evidence="1">Queuosine biosynthesis protein QueE</fullName>
    </alternativeName>
</protein>
<reference key="1">
    <citation type="journal article" date="2002" name="Nucleic Acids Res.">
        <title>Genome sequence of Shigella flexneri 2a: insights into pathogenicity through comparison with genomes of Escherichia coli K12 and O157.</title>
        <authorList>
            <person name="Jin Q."/>
            <person name="Yuan Z."/>
            <person name="Xu J."/>
            <person name="Wang Y."/>
            <person name="Shen Y."/>
            <person name="Lu W."/>
            <person name="Wang J."/>
            <person name="Liu H."/>
            <person name="Yang J."/>
            <person name="Yang F."/>
            <person name="Zhang X."/>
            <person name="Zhang J."/>
            <person name="Yang G."/>
            <person name="Wu H."/>
            <person name="Qu D."/>
            <person name="Dong J."/>
            <person name="Sun L."/>
            <person name="Xue Y."/>
            <person name="Zhao A."/>
            <person name="Gao Y."/>
            <person name="Zhu J."/>
            <person name="Kan B."/>
            <person name="Ding K."/>
            <person name="Chen S."/>
            <person name="Cheng H."/>
            <person name="Yao Z."/>
            <person name="He B."/>
            <person name="Chen R."/>
            <person name="Ma D."/>
            <person name="Qiang B."/>
            <person name="Wen Y."/>
            <person name="Hou Y."/>
            <person name="Yu J."/>
        </authorList>
    </citation>
    <scope>NUCLEOTIDE SEQUENCE [LARGE SCALE GENOMIC DNA]</scope>
    <source>
        <strain>301 / Serotype 2a</strain>
    </source>
</reference>
<reference key="2">
    <citation type="journal article" date="2003" name="Infect. Immun.">
        <title>Complete genome sequence and comparative genomics of Shigella flexneri serotype 2a strain 2457T.</title>
        <authorList>
            <person name="Wei J."/>
            <person name="Goldberg M.B."/>
            <person name="Burland V."/>
            <person name="Venkatesan M.M."/>
            <person name="Deng W."/>
            <person name="Fournier G."/>
            <person name="Mayhew G.F."/>
            <person name="Plunkett G. III"/>
            <person name="Rose D.J."/>
            <person name="Darling A."/>
            <person name="Mau B."/>
            <person name="Perna N.T."/>
            <person name="Payne S.M."/>
            <person name="Runyen-Janecky L.J."/>
            <person name="Zhou S."/>
            <person name="Schwartz D.C."/>
            <person name="Blattner F.R."/>
        </authorList>
    </citation>
    <scope>NUCLEOTIDE SEQUENCE [LARGE SCALE GENOMIC DNA]</scope>
    <source>
        <strain>ATCC 700930 / 2457T / Serotype 2a</strain>
    </source>
</reference>
<gene>
    <name evidence="1" type="primary">queE</name>
    <name type="ordered locus">SF2790</name>
    <name type="ordered locus">S2984</name>
</gene>
<dbReference type="EC" id="4.3.99.3" evidence="1"/>
<dbReference type="EMBL" id="AE005674">
    <property type="protein sequence ID" value="AAN44278.1"/>
    <property type="molecule type" value="Genomic_DNA"/>
</dbReference>
<dbReference type="EMBL" id="AE014073">
    <property type="protein sequence ID" value="AAP18104.1"/>
    <property type="molecule type" value="Genomic_DNA"/>
</dbReference>
<dbReference type="RefSeq" id="WP_001199973.1">
    <property type="nucleotide sequence ID" value="NZ_WPGV01000249.1"/>
</dbReference>
<dbReference type="SMR" id="P64556"/>
<dbReference type="STRING" id="198214.SF2790"/>
<dbReference type="PaxDb" id="198214-SF2790"/>
<dbReference type="GeneID" id="89517576"/>
<dbReference type="KEGG" id="sfl:SF2790"/>
<dbReference type="KEGG" id="sfx:S2984"/>
<dbReference type="PATRIC" id="fig|198214.7.peg.3321"/>
<dbReference type="HOGENOM" id="CLU_066739_3_0_6"/>
<dbReference type="UniPathway" id="UPA00391"/>
<dbReference type="Proteomes" id="UP000001006">
    <property type="component" value="Chromosome"/>
</dbReference>
<dbReference type="Proteomes" id="UP000002673">
    <property type="component" value="Chromosome"/>
</dbReference>
<dbReference type="GO" id="GO:0051539">
    <property type="term" value="F:4 iron, 4 sulfur cluster binding"/>
    <property type="evidence" value="ECO:0007669"/>
    <property type="project" value="UniProtKB-UniRule"/>
</dbReference>
<dbReference type="GO" id="GO:0016840">
    <property type="term" value="F:carbon-nitrogen lyase activity"/>
    <property type="evidence" value="ECO:0007669"/>
    <property type="project" value="UniProtKB-UniRule"/>
</dbReference>
<dbReference type="GO" id="GO:0000287">
    <property type="term" value="F:magnesium ion binding"/>
    <property type="evidence" value="ECO:0007669"/>
    <property type="project" value="UniProtKB-UniRule"/>
</dbReference>
<dbReference type="GO" id="GO:1904047">
    <property type="term" value="F:S-adenosyl-L-methionine binding"/>
    <property type="evidence" value="ECO:0007669"/>
    <property type="project" value="UniProtKB-UniRule"/>
</dbReference>
<dbReference type="GO" id="GO:0008616">
    <property type="term" value="P:queuosine biosynthetic process"/>
    <property type="evidence" value="ECO:0007669"/>
    <property type="project" value="UniProtKB-UniRule"/>
</dbReference>
<dbReference type="FunFam" id="3.20.20.70:FF:000085">
    <property type="entry name" value="7-carboxy-7-deazaguanine synthase"/>
    <property type="match status" value="1"/>
</dbReference>
<dbReference type="Gene3D" id="3.20.20.70">
    <property type="entry name" value="Aldolase class I"/>
    <property type="match status" value="1"/>
</dbReference>
<dbReference type="HAMAP" id="MF_00917">
    <property type="entry name" value="QueE"/>
    <property type="match status" value="1"/>
</dbReference>
<dbReference type="InterPro" id="IPR024924">
    <property type="entry name" value="7-CO-7-deazaguanine_synth-like"/>
</dbReference>
<dbReference type="InterPro" id="IPR013785">
    <property type="entry name" value="Aldolase_TIM"/>
</dbReference>
<dbReference type="InterPro" id="IPR007197">
    <property type="entry name" value="rSAM"/>
</dbReference>
<dbReference type="InterPro" id="IPR027609">
    <property type="entry name" value="rSAM_QueE_proteobac"/>
</dbReference>
<dbReference type="NCBIfam" id="TIGR04322">
    <property type="entry name" value="rSAM_QueE_Ecoli"/>
    <property type="match status" value="1"/>
</dbReference>
<dbReference type="PANTHER" id="PTHR42836">
    <property type="entry name" value="7-CARBOXY-7-DEAZAGUANINE SYNTHASE"/>
    <property type="match status" value="1"/>
</dbReference>
<dbReference type="PANTHER" id="PTHR42836:SF1">
    <property type="entry name" value="7-CARBOXY-7-DEAZAGUANINE SYNTHASE"/>
    <property type="match status" value="1"/>
</dbReference>
<dbReference type="PIRSF" id="PIRSF000370">
    <property type="entry name" value="QueE"/>
    <property type="match status" value="1"/>
</dbReference>
<dbReference type="SFLD" id="SFLDS00029">
    <property type="entry name" value="Radical_SAM"/>
    <property type="match status" value="1"/>
</dbReference>
<dbReference type="SUPFAM" id="SSF102114">
    <property type="entry name" value="Radical SAM enzymes"/>
    <property type="match status" value="1"/>
</dbReference>
<dbReference type="PROSITE" id="PS51918">
    <property type="entry name" value="RADICAL_SAM"/>
    <property type="match status" value="1"/>
</dbReference>
<feature type="chain" id="PRO_0000169318" description="7-carboxy-7-deazaguanine synthase">
    <location>
        <begin position="1"/>
        <end position="223"/>
    </location>
</feature>
<feature type="domain" description="Radical SAM core" evidence="2">
    <location>
        <begin position="18"/>
        <end position="223"/>
    </location>
</feature>
<feature type="binding site" evidence="1">
    <location>
        <begin position="12"/>
        <end position="14"/>
    </location>
    <ligand>
        <name>substrate</name>
    </ligand>
</feature>
<feature type="binding site" evidence="1">
    <location>
        <position position="27"/>
    </location>
    <ligand>
        <name>substrate</name>
    </ligand>
</feature>
<feature type="binding site" evidence="1">
    <location>
        <position position="31"/>
    </location>
    <ligand>
        <name>[4Fe-4S] cluster</name>
        <dbReference type="ChEBI" id="CHEBI:49883"/>
        <note>4Fe-4S-S-AdoMet</note>
    </ligand>
</feature>
<feature type="binding site" evidence="1">
    <location>
        <position position="35"/>
    </location>
    <ligand>
        <name>[4Fe-4S] cluster</name>
        <dbReference type="ChEBI" id="CHEBI:49883"/>
        <note>4Fe-4S-S-AdoMet</note>
    </ligand>
</feature>
<feature type="binding site" evidence="1">
    <location>
        <position position="38"/>
    </location>
    <ligand>
        <name>[4Fe-4S] cluster</name>
        <dbReference type="ChEBI" id="CHEBI:49883"/>
        <note>4Fe-4S-S-AdoMet</note>
    </ligand>
</feature>
<feature type="binding site" evidence="1">
    <location>
        <position position="40"/>
    </location>
    <ligand>
        <name>Mg(2+)</name>
        <dbReference type="ChEBI" id="CHEBI:18420"/>
    </ligand>
</feature>
<feature type="binding site" evidence="1">
    <location>
        <position position="92"/>
    </location>
    <ligand>
        <name>substrate</name>
    </ligand>
</feature>
<feature type="binding site" evidence="1">
    <location>
        <position position="94"/>
    </location>
    <ligand>
        <name>S-adenosyl-L-methionine</name>
        <dbReference type="ChEBI" id="CHEBI:59789"/>
    </ligand>
</feature>
<feature type="binding site" evidence="1">
    <location>
        <begin position="136"/>
        <end position="138"/>
    </location>
    <ligand>
        <name>S-adenosyl-L-methionine</name>
        <dbReference type="ChEBI" id="CHEBI:59789"/>
    </ligand>
</feature>
<proteinExistence type="inferred from homology"/>
<accession>P64556</accession>
<accession>P55139</accession>
<sequence length="223" mass="25030">MQYPINEMFQTLQGEGYFTGVPAIFIRLQGCPVGCAWCDTKHTWEKLEDREVSLFSILAKTKESDKWGAASSEDLLAVIGRQGYTARHVVITGGEPCIHDLLPLTDLLEKNGFSCQIETSGTHEVRCTPNTWVTVSPKLNMRGGYEVLSQALERANEIKHPVGRVRDIEALDELLATLTDDKPRVIALQPISQKDDATRLCIETCIARNWRLSMQTHKYLNIA</sequence>
<name>QUEE_SHIFL</name>
<keyword id="KW-0004">4Fe-4S</keyword>
<keyword id="KW-0408">Iron</keyword>
<keyword id="KW-0411">Iron-sulfur</keyword>
<keyword id="KW-0456">Lyase</keyword>
<keyword id="KW-0460">Magnesium</keyword>
<keyword id="KW-0479">Metal-binding</keyword>
<keyword id="KW-0671">Queuosine biosynthesis</keyword>
<keyword id="KW-1185">Reference proteome</keyword>
<keyword id="KW-0949">S-adenosyl-L-methionine</keyword>
<comment type="function">
    <text evidence="1">Catalyzes the complex heterocyclic radical-mediated conversion of 6-carboxy-5,6,7,8-tetrahydropterin (CPH4) to 7-carboxy-7-deazaguanine (CDG), a step common to the biosynthetic pathways of all 7-deazapurine-containing compounds.</text>
</comment>
<comment type="catalytic activity">
    <reaction evidence="1">
        <text>6-carboxy-5,6,7,8-tetrahydropterin + H(+) = 7-carboxy-7-deazaguanine + NH4(+)</text>
        <dbReference type="Rhea" id="RHEA:27974"/>
        <dbReference type="ChEBI" id="CHEBI:15378"/>
        <dbReference type="ChEBI" id="CHEBI:28938"/>
        <dbReference type="ChEBI" id="CHEBI:61032"/>
        <dbReference type="ChEBI" id="CHEBI:61036"/>
        <dbReference type="EC" id="4.3.99.3"/>
    </reaction>
</comment>
<comment type="cofactor">
    <cofactor evidence="1">
        <name>[4Fe-4S] cluster</name>
        <dbReference type="ChEBI" id="CHEBI:49883"/>
    </cofactor>
    <text evidence="1">Binds 1 [4Fe-4S] cluster. The cluster is coordinated with 3 cysteines and an exchangeable S-adenosyl-L-methionine.</text>
</comment>
<comment type="cofactor">
    <cofactor evidence="1">
        <name>S-adenosyl-L-methionine</name>
        <dbReference type="ChEBI" id="CHEBI:59789"/>
    </cofactor>
    <text evidence="1">Binds 1 S-adenosyl-L-methionine per subunit.</text>
</comment>
<comment type="cofactor">
    <cofactor evidence="1">
        <name>Mg(2+)</name>
        <dbReference type="ChEBI" id="CHEBI:18420"/>
    </cofactor>
</comment>
<comment type="pathway">
    <text evidence="1">Purine metabolism; 7-cyano-7-deazaguanine biosynthesis.</text>
</comment>
<comment type="subunit">
    <text evidence="1">Homodimer.</text>
</comment>
<comment type="similarity">
    <text evidence="1">Belongs to the radical SAM superfamily. 7-carboxy-7-deazaguanine synthase family.</text>
</comment>
<evidence type="ECO:0000255" key="1">
    <source>
        <dbReference type="HAMAP-Rule" id="MF_00917"/>
    </source>
</evidence>
<evidence type="ECO:0000255" key="2">
    <source>
        <dbReference type="PROSITE-ProRule" id="PRU01266"/>
    </source>
</evidence>